<evidence type="ECO:0000250" key="1">
    <source>
        <dbReference type="UniProtKB" id="O43290"/>
    </source>
</evidence>
<evidence type="ECO:0000255" key="2"/>
<evidence type="ECO:0000256" key="3">
    <source>
        <dbReference type="SAM" id="MobiDB-lite"/>
    </source>
</evidence>
<evidence type="ECO:0000269" key="4">
    <source>
    </source>
</evidence>
<evidence type="ECO:0000305" key="5"/>
<evidence type="ECO:0007744" key="6">
    <source>
    </source>
</evidence>
<organism>
    <name type="scientific">Mus musculus</name>
    <name type="common">Mouse</name>
    <dbReference type="NCBI Taxonomy" id="10090"/>
    <lineage>
        <taxon>Eukaryota</taxon>
        <taxon>Metazoa</taxon>
        <taxon>Chordata</taxon>
        <taxon>Craniata</taxon>
        <taxon>Vertebrata</taxon>
        <taxon>Euteleostomi</taxon>
        <taxon>Mammalia</taxon>
        <taxon>Eutheria</taxon>
        <taxon>Euarchontoglires</taxon>
        <taxon>Glires</taxon>
        <taxon>Rodentia</taxon>
        <taxon>Myomorpha</taxon>
        <taxon>Muroidea</taxon>
        <taxon>Muridae</taxon>
        <taxon>Murinae</taxon>
        <taxon>Mus</taxon>
        <taxon>Mus</taxon>
    </lineage>
</organism>
<keyword id="KW-0175">Coiled coil</keyword>
<keyword id="KW-1017">Isopeptide bond</keyword>
<keyword id="KW-0507">mRNA processing</keyword>
<keyword id="KW-0508">mRNA splicing</keyword>
<keyword id="KW-0539">Nucleus</keyword>
<keyword id="KW-0597">Phosphoprotein</keyword>
<keyword id="KW-1185">Reference proteome</keyword>
<keyword id="KW-0747">Spliceosome</keyword>
<keyword id="KW-0832">Ubl conjugation</keyword>
<accession>Q9Z315</accession>
<accession>Q8K155</accession>
<accession>Q9R1I9</accession>
<accession>Q9R270</accession>
<gene>
    <name type="primary">Sart1</name>
    <name type="synonym">Haf</name>
</gene>
<reference key="1">
    <citation type="journal article" date="1998" name="Jpn. J. Cancer Res.">
        <title>Sequence analysis of genes encoding rodent homologues of the human tumor-rejection antigen SART-1.</title>
        <authorList>
            <person name="Gotoh M."/>
            <person name="Shichijo S."/>
            <person name="Hoshino T."/>
            <person name="Imai Y."/>
            <person name="Imaizumi T."/>
            <person name="Inoue Y."/>
            <person name="Takasu H."/>
            <person name="Yamaoka T."/>
            <person name="Itoh K."/>
        </authorList>
    </citation>
    <scope>NUCLEOTIDE SEQUENCE [MRNA]</scope>
    <source>
        <tissue>Brain</tissue>
    </source>
</reference>
<reference key="2">
    <citation type="journal article" date="2000" name="Blood">
        <title>A new transacting factor that modulates hypoxia-induced expression of the erythropoietin gene.</title>
        <authorList>
            <person name="Gupta M."/>
            <person name="Mungai P.T."/>
            <person name="Goldwasser E."/>
        </authorList>
    </citation>
    <scope>NUCLEOTIDE SEQUENCE [MRNA]</scope>
    <scope>TISSUE SPECIFICITY</scope>
    <scope>DEVELOPMENTAL STAGE</scope>
    <scope>FUNCTION</scope>
</reference>
<reference key="3">
    <citation type="journal article" date="2004" name="Genome Res.">
        <title>The status, quality, and expansion of the NIH full-length cDNA project: the Mammalian Gene Collection (MGC).</title>
        <authorList>
            <consortium name="The MGC Project Team"/>
        </authorList>
    </citation>
    <scope>NUCLEOTIDE SEQUENCE [LARGE SCALE MRNA]</scope>
    <source>
        <strain>FVB/N</strain>
        <tissue>Liver</tissue>
    </source>
</reference>
<reference key="4">
    <citation type="journal article" date="2001" name="Gene">
        <title>Intron loss in the SART1 genes of Fugu rubripes and Tetraodon nigroviridis.</title>
        <authorList>
            <person name="Bolland D.J."/>
            <person name="Hewitt J.E."/>
        </authorList>
    </citation>
    <scope>NUCLEOTIDE SEQUENCE [GENOMIC DNA] OF 635-742</scope>
    <source>
        <strain>C57BL/6J</strain>
    </source>
</reference>
<reference key="5">
    <citation type="journal article" date="2010" name="Cell">
        <title>A tissue-specific atlas of mouse protein phosphorylation and expression.</title>
        <authorList>
            <person name="Huttlin E.L."/>
            <person name="Jedrychowski M.P."/>
            <person name="Elias J.E."/>
            <person name="Goswami T."/>
            <person name="Rad R."/>
            <person name="Beausoleil S.A."/>
            <person name="Villen J."/>
            <person name="Haas W."/>
            <person name="Sowa M.E."/>
            <person name="Gygi S.P."/>
        </authorList>
    </citation>
    <scope>PHOSPHORYLATION [LARGE SCALE ANALYSIS] AT THR-189 AND SER-480</scope>
    <scope>IDENTIFICATION BY MASS SPECTROMETRY [LARGE SCALE ANALYSIS]</scope>
    <source>
        <tissue>Brain</tissue>
        <tissue>Kidney</tissue>
        <tissue>Lung</tissue>
        <tissue>Pancreas</tissue>
        <tissue>Spleen</tissue>
        <tissue>Testis</tissue>
    </source>
</reference>
<sequence>MGSSKKHRGEKEAAGTTAAAGTGGTTEQPPRHREHKKHKHRSSGGGSSGGERRKRSRERGSERGSGRRGAEAEARSGAHGRERSQAEPSERRVKREKRDDGYEAAASSKASSGDASSLSIEETNKLRAKLGLKPLEVNAVKKEAGTKEEPVAADVINPMALRQREELREKLAAAKEKRLLNQKLGKIKTLGEDDPWLDDTAAWIERSRQLQKEKDLAEKRAKLLEEMDQEFGVSTLVEEEFEQRRQDLYSARDLQGLTVEHAIDSFREGETVVLTLKDKGVLQDGEDVLVNVNMVDKERADKNVELRKKKPDYLPYAEDESVDDLAQQKPRSILAKYDEELEGERPHSFRLEQGGMADGLRERELEEIRTKLRLQAQSLSSVGPRLASEYLSPEEMVTFKKTKRRVKKIRKKEKEVIMRADDLLPLGDQTQDGDFGSRLRGRGRRRVPEVEEEALEDEEKDPVAQPPPSDDTRVENMDISDEEDGGALPPGSPEGLEEDEAELELQKQLEKGRRLRQLQQLQQLRDSGEKVLEIVKKLESRQRGWEEEEDPERKGTIVFNATSEFCRTLGEIPTYGLAGNREEQEELMDFERDEERSANGGSESDGEENIGWSTVNLDEEKQHQDFSASSTTILDEEPIVNRGLAAALLLCQNKGLLETTVQKVARVKAPNKSLPSAVYCIEDKMAIDDKYSRREEYRGFTQDFKEKDGYKPDVKIEYVDETGRKLTPKEAFRQLSHRFHGKGSGKMKTERRMKKLDEEALLKKMSSSDTPLGTVALLQEKQKAQKTPYIVLSGSGKSMNANTITK</sequence>
<protein>
    <recommendedName>
        <fullName>U4/U6.U5 tri-snRNP-associated protein 1</fullName>
    </recommendedName>
    <alternativeName>
        <fullName>Hypoxia-associated factor</fullName>
    </alternativeName>
    <alternativeName>
        <fullName>Squamous cell carcinoma antigen recognized by T-cells 1</fullName>
        <shortName>SART-1</shortName>
        <shortName>mSART-1</shortName>
    </alternativeName>
</protein>
<dbReference type="EMBL" id="AB014721">
    <property type="protein sequence ID" value="BAA36583.1"/>
    <property type="molecule type" value="mRNA"/>
</dbReference>
<dbReference type="EMBL" id="AF129931">
    <property type="protein sequence ID" value="AAD20645.1"/>
    <property type="molecule type" value="mRNA"/>
</dbReference>
<dbReference type="EMBL" id="BC028823">
    <property type="protein sequence ID" value="AAH28823.1"/>
    <property type="molecule type" value="mRNA"/>
</dbReference>
<dbReference type="EMBL" id="BC051394">
    <property type="protein sequence ID" value="AAH51394.1"/>
    <property type="molecule type" value="mRNA"/>
</dbReference>
<dbReference type="EMBL" id="AF105334">
    <property type="protein sequence ID" value="AAD38450.1"/>
    <property type="molecule type" value="Genomic_DNA"/>
</dbReference>
<dbReference type="CCDS" id="CCDS29460.1"/>
<dbReference type="RefSeq" id="NP_058578.3">
    <property type="nucleotide sequence ID" value="NM_016882.3"/>
</dbReference>
<dbReference type="SMR" id="Q9Z315"/>
<dbReference type="BioGRID" id="203075">
    <property type="interactions" value="28"/>
</dbReference>
<dbReference type="FunCoup" id="Q9Z315">
    <property type="interactions" value="4373"/>
</dbReference>
<dbReference type="IntAct" id="Q9Z315">
    <property type="interactions" value="25"/>
</dbReference>
<dbReference type="MINT" id="Q9Z315"/>
<dbReference type="STRING" id="10090.ENSMUSP00000047397"/>
<dbReference type="GlyGen" id="Q9Z315">
    <property type="glycosylation" value="1 site, 1 O-linked glycan (1 site)"/>
</dbReference>
<dbReference type="iPTMnet" id="Q9Z315"/>
<dbReference type="PhosphoSitePlus" id="Q9Z315"/>
<dbReference type="SwissPalm" id="Q9Z315"/>
<dbReference type="jPOST" id="Q9Z315"/>
<dbReference type="PaxDb" id="10090-ENSMUSP00000047397"/>
<dbReference type="PeptideAtlas" id="Q9Z315"/>
<dbReference type="ProteomicsDB" id="261465"/>
<dbReference type="Pumba" id="Q9Z315"/>
<dbReference type="Antibodypedia" id="30019">
    <property type="antibodies" value="214 antibodies from 35 providers"/>
</dbReference>
<dbReference type="DNASU" id="20227"/>
<dbReference type="Ensembl" id="ENSMUST00000044207.5">
    <property type="protein sequence ID" value="ENSMUSP00000047397.5"/>
    <property type="gene ID" value="ENSMUSG00000039148.6"/>
</dbReference>
<dbReference type="GeneID" id="20227"/>
<dbReference type="KEGG" id="mmu:20227"/>
<dbReference type="UCSC" id="uc008gcu.1">
    <property type="organism name" value="mouse"/>
</dbReference>
<dbReference type="AGR" id="MGI:1309453"/>
<dbReference type="CTD" id="9092"/>
<dbReference type="MGI" id="MGI:1309453">
    <property type="gene designation" value="Sart1"/>
</dbReference>
<dbReference type="VEuPathDB" id="HostDB:ENSMUSG00000039148"/>
<dbReference type="eggNOG" id="KOG2217">
    <property type="taxonomic scope" value="Eukaryota"/>
</dbReference>
<dbReference type="GeneTree" id="ENSGT00390000007071"/>
<dbReference type="HOGENOM" id="CLU_009379_3_0_1"/>
<dbReference type="InParanoid" id="Q9Z315"/>
<dbReference type="OMA" id="KRRDYTG"/>
<dbReference type="OrthoDB" id="5583at2759"/>
<dbReference type="PhylomeDB" id="Q9Z315"/>
<dbReference type="TreeFam" id="TF318828"/>
<dbReference type="Reactome" id="R-MMU-72163">
    <property type="pathway name" value="mRNA Splicing - Major Pathway"/>
</dbReference>
<dbReference type="BioGRID-ORCS" id="20227">
    <property type="hits" value="15 hits in 80 CRISPR screens"/>
</dbReference>
<dbReference type="ChiTaRS" id="Sart1">
    <property type="organism name" value="mouse"/>
</dbReference>
<dbReference type="PRO" id="PR:Q9Z315"/>
<dbReference type="Proteomes" id="UP000000589">
    <property type="component" value="Chromosome 19"/>
</dbReference>
<dbReference type="RNAct" id="Q9Z315">
    <property type="molecule type" value="protein"/>
</dbReference>
<dbReference type="Bgee" id="ENSMUSG00000039148">
    <property type="expression patterns" value="Expressed in retinal neural layer and 279 other cell types or tissues"/>
</dbReference>
<dbReference type="ExpressionAtlas" id="Q9Z315">
    <property type="expression patterns" value="baseline and differential"/>
</dbReference>
<dbReference type="GO" id="GO:0015030">
    <property type="term" value="C:Cajal body"/>
    <property type="evidence" value="ECO:0007669"/>
    <property type="project" value="Ensembl"/>
</dbReference>
<dbReference type="GO" id="GO:0071013">
    <property type="term" value="C:catalytic step 2 spliceosome"/>
    <property type="evidence" value="ECO:0007669"/>
    <property type="project" value="Ensembl"/>
</dbReference>
<dbReference type="GO" id="GO:0005794">
    <property type="term" value="C:Golgi apparatus"/>
    <property type="evidence" value="ECO:0007669"/>
    <property type="project" value="Ensembl"/>
</dbReference>
<dbReference type="GO" id="GO:0016607">
    <property type="term" value="C:nuclear speck"/>
    <property type="evidence" value="ECO:0007669"/>
    <property type="project" value="Ensembl"/>
</dbReference>
<dbReference type="GO" id="GO:0071005">
    <property type="term" value="C:U2-type precatalytic spliceosome"/>
    <property type="evidence" value="ECO:0007669"/>
    <property type="project" value="Ensembl"/>
</dbReference>
<dbReference type="GO" id="GO:0046540">
    <property type="term" value="C:U4/U6 x U5 tri-snRNP complex"/>
    <property type="evidence" value="ECO:0007669"/>
    <property type="project" value="Ensembl"/>
</dbReference>
<dbReference type="GO" id="GO:0000398">
    <property type="term" value="P:mRNA splicing, via spliceosome"/>
    <property type="evidence" value="ECO:0007669"/>
    <property type="project" value="Ensembl"/>
</dbReference>
<dbReference type="GO" id="GO:0045585">
    <property type="term" value="P:positive regulation of cytotoxic T cell differentiation"/>
    <property type="evidence" value="ECO:0007669"/>
    <property type="project" value="Ensembl"/>
</dbReference>
<dbReference type="InterPro" id="IPR045347">
    <property type="entry name" value="HIND"/>
</dbReference>
<dbReference type="InterPro" id="IPR005011">
    <property type="entry name" value="SNU66/SART1"/>
</dbReference>
<dbReference type="PANTHER" id="PTHR14152">
    <property type="entry name" value="SQUAMOUS CELL CARCINOMA ANTIGEN RECOGNISED BY CYTOTOXIC T LYMPHOCYTES"/>
    <property type="match status" value="1"/>
</dbReference>
<dbReference type="PANTHER" id="PTHR14152:SF5">
    <property type="entry name" value="U4_U6.U5 TRI-SNRNP-ASSOCIATED PROTEIN 1"/>
    <property type="match status" value="1"/>
</dbReference>
<dbReference type="Pfam" id="PF19252">
    <property type="entry name" value="HIND"/>
    <property type="match status" value="1"/>
</dbReference>
<dbReference type="Pfam" id="PF03343">
    <property type="entry name" value="SART-1"/>
    <property type="match status" value="1"/>
</dbReference>
<feature type="chain" id="PRO_0000223309" description="U4/U6.U5 tri-snRNP-associated protein 1">
    <location>
        <begin position="1"/>
        <end position="806"/>
    </location>
</feature>
<feature type="region of interest" description="Disordered" evidence="3">
    <location>
        <begin position="1"/>
        <end position="121"/>
    </location>
</feature>
<feature type="region of interest" description="Disordered" evidence="3">
    <location>
        <begin position="418"/>
        <end position="504"/>
    </location>
</feature>
<feature type="region of interest" description="Disordered" evidence="3">
    <location>
        <begin position="578"/>
        <end position="610"/>
    </location>
</feature>
<feature type="coiled-coil region" evidence="2">
    <location>
        <begin position="157"/>
        <end position="231"/>
    </location>
</feature>
<feature type="coiled-coil region" evidence="2">
    <location>
        <begin position="494"/>
        <end position="540"/>
    </location>
</feature>
<feature type="compositionally biased region" description="Basic residues" evidence="3">
    <location>
        <begin position="32"/>
        <end position="42"/>
    </location>
</feature>
<feature type="compositionally biased region" description="Basic and acidic residues" evidence="3">
    <location>
        <begin position="58"/>
        <end position="101"/>
    </location>
</feature>
<feature type="compositionally biased region" description="Low complexity" evidence="3">
    <location>
        <begin position="104"/>
        <end position="119"/>
    </location>
</feature>
<feature type="compositionally biased region" description="Acidic residues" evidence="3">
    <location>
        <begin position="450"/>
        <end position="460"/>
    </location>
</feature>
<feature type="modified residue" description="Phosphothreonine" evidence="6">
    <location>
        <position position="189"/>
    </location>
</feature>
<feature type="modified residue" description="Phosphoserine" evidence="1">
    <location>
        <position position="321"/>
    </location>
</feature>
<feature type="modified residue" description="Phosphoserine" evidence="1">
    <location>
        <position position="348"/>
    </location>
</feature>
<feature type="modified residue" description="Phosphothreonine" evidence="1">
    <location>
        <position position="430"/>
    </location>
</feature>
<feature type="modified residue" description="Phosphoserine" evidence="6">
    <location>
        <position position="480"/>
    </location>
</feature>
<feature type="modified residue" description="Phosphoserine" evidence="1">
    <location>
        <position position="492"/>
    </location>
</feature>
<feature type="modified residue" description="Phosphoserine" evidence="1">
    <location>
        <position position="527"/>
    </location>
</feature>
<feature type="modified residue" description="Phosphoserine" evidence="1">
    <location>
        <position position="597"/>
    </location>
</feature>
<feature type="modified residue" description="Phosphoserine" evidence="1">
    <location>
        <position position="602"/>
    </location>
</feature>
<feature type="modified residue" description="Phosphoserine" evidence="1">
    <location>
        <position position="604"/>
    </location>
</feature>
<feature type="modified residue" description="Phosphoserine" evidence="1">
    <location>
        <position position="627"/>
    </location>
</feature>
<feature type="modified residue" description="Phosphothreonine" evidence="1">
    <location>
        <position position="701"/>
    </location>
</feature>
<feature type="modified residue" description="Phosphoserine" evidence="1">
    <location>
        <position position="767"/>
    </location>
</feature>
<feature type="modified residue" description="Phosphothreonine" evidence="1">
    <location>
        <position position="770"/>
    </location>
</feature>
<feature type="modified residue" description="Phosphoserine" evidence="1">
    <location>
        <position position="795"/>
    </location>
</feature>
<feature type="cross-link" description="Glycyl lysine isopeptide (Lys-Gly) (interchain with G-Cter in SUMO2)" evidence="1">
    <location>
        <position position="125"/>
    </location>
</feature>
<feature type="cross-link" description="Glycyl lysine isopeptide (Lys-Gly) (interchain with G-Cter in SUMO2)" evidence="1">
    <location>
        <position position="133"/>
    </location>
</feature>
<feature type="cross-link" description="Glycyl lysine isopeptide (Lys-Gly) (interchain with G-Cter in SUMO1); alternate" evidence="1">
    <location>
        <position position="141"/>
    </location>
</feature>
<feature type="cross-link" description="Glycyl lysine isopeptide (Lys-Gly) (interchain with G-Cter in SUMO2); alternate" evidence="1">
    <location>
        <position position="141"/>
    </location>
</feature>
<feature type="cross-link" description="Glycyl lysine isopeptide (Lys-Gly) (interchain with G-Cter in SUMO2)" evidence="1">
    <location>
        <position position="147"/>
    </location>
</feature>
<feature type="cross-link" description="Glycyl lysine isopeptide (Lys-Gly) (interchain with G-Cter in SUMO2)" evidence="1">
    <location>
        <position position="188"/>
    </location>
</feature>
<feature type="cross-link" description="Glycyl lysine isopeptide (Lys-Gly) (interchain with G-Cter in SUMO2)" evidence="1">
    <location>
        <position position="277"/>
    </location>
</feature>
<feature type="cross-link" description="Glycyl lysine isopeptide (Lys-Gly) (interchain with G-Cter in SUMO2)" evidence="1">
    <location>
        <position position="329"/>
    </location>
</feature>
<feature type="cross-link" description="Glycyl lysine isopeptide (Lys-Gly) (interchain with G-Cter in SUMO2)" evidence="1">
    <location>
        <position position="336"/>
    </location>
</feature>
<feature type="cross-link" description="Glycyl lysine isopeptide (Lys-Gly) (interchain with G-Cter in SUMO2)" evidence="1">
    <location>
        <position position="400"/>
    </location>
</feature>
<feature type="cross-link" description="Glycyl lysine isopeptide (Lys-Gly) (interchain with G-Cter in SUMO2)" evidence="1">
    <location>
        <position position="414"/>
    </location>
</feature>
<feature type="cross-link" description="Glycyl lysine isopeptide (Lys-Gly) (interchain with G-Cter in SUMO2)" evidence="1">
    <location>
        <position position="554"/>
    </location>
</feature>
<feature type="cross-link" description="Glycyl lysine isopeptide (Lys-Gly) (interchain with G-Cter in SUMO2)" evidence="1">
    <location>
        <position position="654"/>
    </location>
</feature>
<feature type="cross-link" description="Glycyl lysine isopeptide (Lys-Gly) (interchain with G-Cter in SUMO2)" evidence="1">
    <location>
        <position position="663"/>
    </location>
</feature>
<feature type="cross-link" description="Glycyl lysine isopeptide (Lys-Gly) (interchain with G-Cter in SUMO2)" evidence="1">
    <location>
        <position position="690"/>
    </location>
</feature>
<feature type="cross-link" description="Glycyl lysine isopeptide (Lys-Gly) (interchain with G-Cter in SUMO2)" evidence="1">
    <location>
        <position position="705"/>
    </location>
</feature>
<feature type="cross-link" description="Glycyl lysine isopeptide (Lys-Gly) (interchain with G-Cter in SUMO2)" evidence="1">
    <location>
        <position position="715"/>
    </location>
</feature>
<feature type="cross-link" description="Glycyl lysine isopeptide (Lys-Gly) (interchain with G-Cter in SUMO2)" evidence="1">
    <location>
        <position position="729"/>
    </location>
</feature>
<feature type="cross-link" description="Glycyl lysine isopeptide (Lys-Gly) (interchain with G-Cter in SUMO2)" evidence="1">
    <location>
        <position position="755"/>
    </location>
</feature>
<feature type="cross-link" description="Glycyl lysine isopeptide (Lys-Gly) (interchain with G-Cter in SUMO2)" evidence="1">
    <location>
        <position position="764"/>
    </location>
</feature>
<feature type="cross-link" description="Glycyl lysine isopeptide (Lys-Gly) (interchain with G-Cter in SUMO2)" evidence="1">
    <location>
        <position position="781"/>
    </location>
</feature>
<feature type="cross-link" description="Glycyl lysine isopeptide (Lys-Gly) (interchain with G-Cter in SUMO2)" evidence="1">
    <location>
        <position position="786"/>
    </location>
</feature>
<feature type="cross-link" description="Glycyl lysine isopeptide (Lys-Gly) (interchain with G-Cter in SUMO2)" evidence="1">
    <location>
        <position position="797"/>
    </location>
</feature>
<feature type="sequence conflict" description="In Ref. 2; AAD20645 and 3; AAH28823/AAH51394." evidence="5" ref="2 3">
    <original>A</original>
    <variation>T</variation>
    <location>
        <position position="70"/>
    </location>
</feature>
<feature type="sequence conflict" description="In Ref. 2; AAD20645." evidence="5" ref="2">
    <original>C</original>
    <variation>Y</variation>
    <location>
        <position position="566"/>
    </location>
</feature>
<name>SNUT1_MOUSE</name>
<comment type="function">
    <text evidence="1 4">Plays a role in mRNA splicing as a component of the U4/U6-U5 tri-snRNP, one of the building blocks of the spliceosome. May also bind to DNA.</text>
</comment>
<comment type="subunit">
    <text evidence="1">Identified in the spliceosome C complex. Component of the U4/U6-U5 tri-snRNP complex composed of the U4, U6 and U5 snRNAs and at least PRPF3, PRPF4, PRPF6, PRPF8, PRPF31, SNRNP200, TXNL4A, SNRNP40, DDX23, CD2BP2, PPIH, SNU13, EFTUD2, SART1 and USP39. Interacts with UBL5. Interacts with IVNS1ABP (via Kelch repeats) (By similarity).</text>
</comment>
<comment type="subcellular location">
    <subcellularLocation>
        <location evidence="1">Nucleus</location>
    </subcellularLocation>
    <text evidence="1">Found in the nucleus of mitogen-activated peripheral blood mononuclear cells (PBMCs), tumor cells, or normal cell lines, but not in normal tissues except testis and fetal liver or in unstimulated PBMCs, suggesting preferential expression in proliferating cells.</text>
</comment>
<comment type="tissue specificity">
    <text evidence="4">Ubiquitously expressed. Shows a high expression in fetal liver and a low expression in adult liver.</text>
</comment>
<comment type="developmental stage">
    <text evidence="4">Expressed at maximal level at 12 dpc. Declines progressively until birth.</text>
</comment>
<comment type="PTM">
    <text evidence="1">Sumoylated with SUMO2.</text>
</comment>
<comment type="similarity">
    <text evidence="5">Belongs to the SNU66/SART1 family.</text>
</comment>
<proteinExistence type="evidence at protein level"/>